<organism>
    <name type="scientific">Manduca sexta</name>
    <name type="common">Tobacco hawkmoth</name>
    <name type="synonym">Tobacco hornworm</name>
    <dbReference type="NCBI Taxonomy" id="7130"/>
    <lineage>
        <taxon>Eukaryota</taxon>
        <taxon>Metazoa</taxon>
        <taxon>Ecdysozoa</taxon>
        <taxon>Arthropoda</taxon>
        <taxon>Hexapoda</taxon>
        <taxon>Insecta</taxon>
        <taxon>Pterygota</taxon>
        <taxon>Neoptera</taxon>
        <taxon>Endopterygota</taxon>
        <taxon>Lepidoptera</taxon>
        <taxon>Glossata</taxon>
        <taxon>Ditrysia</taxon>
        <taxon>Bombycoidea</taxon>
        <taxon>Sphingidae</taxon>
        <taxon>Sphinginae</taxon>
        <taxon>Sphingini</taxon>
        <taxon>Manduca</taxon>
    </lineage>
</organism>
<feature type="signal peptide" evidence="1 5">
    <location>
        <begin position="1"/>
        <end position="19"/>
    </location>
</feature>
<feature type="chain" id="PRO_0000002821" description="Beta-1,3-glucan-binding protein 1">
    <location>
        <begin position="20"/>
        <end position="487"/>
    </location>
</feature>
<feature type="domain" description="CBM39" evidence="3">
    <location>
        <begin position="20"/>
        <end position="119"/>
    </location>
</feature>
<feature type="domain" description="GH16" evidence="2">
    <location>
        <begin position="157"/>
        <end position="487"/>
    </location>
</feature>
<feature type="region of interest" description="Disordered" evidence="4">
    <location>
        <begin position="123"/>
        <end position="151"/>
    </location>
</feature>
<feature type="compositionally biased region" description="Low complexity" evidence="4">
    <location>
        <begin position="133"/>
        <end position="150"/>
    </location>
</feature>
<feature type="glycosylation site" description="N-linked (GlcNAc...) asparagine" evidence="8">
    <location>
        <position position="368"/>
    </location>
</feature>
<evidence type="ECO:0000255" key="1"/>
<evidence type="ECO:0000255" key="2">
    <source>
        <dbReference type="PROSITE-ProRule" id="PRU01098"/>
    </source>
</evidence>
<evidence type="ECO:0000255" key="3">
    <source>
        <dbReference type="PROSITE-ProRule" id="PRU01314"/>
    </source>
</evidence>
<evidence type="ECO:0000256" key="4">
    <source>
        <dbReference type="SAM" id="MobiDB-lite"/>
    </source>
</evidence>
<evidence type="ECO:0000269" key="5">
    <source>
    </source>
</evidence>
<evidence type="ECO:0000269" key="6">
    <source>
    </source>
</evidence>
<evidence type="ECO:0000305" key="7"/>
<evidence type="ECO:0000305" key="8">
    <source>
    </source>
</evidence>
<evidence type="ECO:0000312" key="9">
    <source>
        <dbReference type="EMBL" id="AAF44011.1"/>
    </source>
</evidence>
<reference evidence="7 9" key="1">
    <citation type="journal article" date="2000" name="J. Biol. Chem.">
        <title>A beta1,3-glucan recognition protein from an insect, Manduca sexta, agglutinates microorganisms and activates the phenoloxidase cascade.</title>
        <authorList>
            <person name="Ma C."/>
            <person name="Kanost M.R."/>
        </authorList>
    </citation>
    <scope>NUCLEOTIDE SEQUENCE [MRNA]</scope>
    <scope>PROTEIN SEQUENCE OF 20-42</scope>
    <scope>FUNCTION</scope>
    <scope>SUBUNIT</scope>
    <scope>SUBCELLULAR LOCATION</scope>
    <scope>TISSUE SPECIFICITY</scope>
    <scope>MASS SPECTROMETRY</scope>
    <scope>GLYCOSYLATION</scope>
    <source>
        <tissue evidence="9">Fat body</tissue>
        <tissue evidence="5">Larval hemolymph</tissue>
    </source>
</reference>
<reference evidence="7" key="2">
    <citation type="journal article" date="2004" name="Insect Biochem. Mol. Biol.">
        <title>Beta-1,3-glucan recognition protein-2 (betaGRP-2) from Manduca sexta: an acute-phase protein that binds beta-1,3-glucan and lipoteichoic acid to aggregate fungi and bacteria and stimulate prophenoloxidase activation.</title>
        <authorList>
            <person name="Jiang H."/>
            <person name="Ma C."/>
            <person name="Lu Z.-Q."/>
            <person name="Kanost M.R."/>
        </authorList>
    </citation>
    <scope>DEVELOPMENTAL STAGE</scope>
</reference>
<protein>
    <recommendedName>
        <fullName>Beta-1,3-glucan-binding protein 1</fullName>
        <shortName>BGBP-1</shortName>
    </recommendedName>
    <alternativeName>
        <fullName>Beta-1,3-glucan recognition protein 1</fullName>
        <shortName>BetaGRP-1</shortName>
    </alternativeName>
</protein>
<name>BGBP1_MANSE</name>
<keyword id="KW-0903">Direct protein sequencing</keyword>
<keyword id="KW-0325">Glycoprotein</keyword>
<keyword id="KW-0391">Immunity</keyword>
<keyword id="KW-0399">Innate immunity</keyword>
<keyword id="KW-0964">Secreted</keyword>
<keyword id="KW-0732">Signal</keyword>
<dbReference type="EMBL" id="AF177982">
    <property type="protein sequence ID" value="AAF44011.1"/>
    <property type="molecule type" value="mRNA"/>
</dbReference>
<dbReference type="SMR" id="Q9NJ98"/>
<dbReference type="CAZy" id="CBM39">
    <property type="family name" value="Carbohydrate-Binding Module Family 39"/>
</dbReference>
<dbReference type="CAZy" id="GH16">
    <property type="family name" value="Glycoside Hydrolase Family 16"/>
</dbReference>
<dbReference type="iPTMnet" id="Q9NJ98"/>
<dbReference type="OrthoDB" id="4781at2759"/>
<dbReference type="GO" id="GO:0005576">
    <property type="term" value="C:extracellular region"/>
    <property type="evidence" value="ECO:0000314"/>
    <property type="project" value="UniProtKB"/>
</dbReference>
<dbReference type="GO" id="GO:0030246">
    <property type="term" value="F:carbohydrate binding"/>
    <property type="evidence" value="ECO:0007669"/>
    <property type="project" value="InterPro"/>
</dbReference>
<dbReference type="GO" id="GO:0004553">
    <property type="term" value="F:hydrolase activity, hydrolyzing O-glycosyl compounds"/>
    <property type="evidence" value="ECO:0007669"/>
    <property type="project" value="InterPro"/>
</dbReference>
<dbReference type="GO" id="GO:0038187">
    <property type="term" value="F:pattern recognition receptor activity"/>
    <property type="evidence" value="ECO:0000314"/>
    <property type="project" value="UniProtKB"/>
</dbReference>
<dbReference type="GO" id="GO:0005975">
    <property type="term" value="P:carbohydrate metabolic process"/>
    <property type="evidence" value="ECO:0007669"/>
    <property type="project" value="InterPro"/>
</dbReference>
<dbReference type="GO" id="GO:0002752">
    <property type="term" value="P:cell surface pattern recognition receptor signaling pathway"/>
    <property type="evidence" value="ECO:0000314"/>
    <property type="project" value="UniProtKB"/>
</dbReference>
<dbReference type="GO" id="GO:0045087">
    <property type="term" value="P:innate immune response"/>
    <property type="evidence" value="ECO:0007669"/>
    <property type="project" value="UniProtKB-KW"/>
</dbReference>
<dbReference type="GO" id="GO:0045088">
    <property type="term" value="P:regulation of innate immune response"/>
    <property type="evidence" value="ECO:0000314"/>
    <property type="project" value="UniProtKB"/>
</dbReference>
<dbReference type="CDD" id="cd02179">
    <property type="entry name" value="GH16_beta_GRP"/>
    <property type="match status" value="1"/>
</dbReference>
<dbReference type="FunFam" id="2.60.120.200:FF:000235">
    <property type="entry name" value="Beta-1,3-glucan-binding protein"/>
    <property type="match status" value="1"/>
</dbReference>
<dbReference type="FunFam" id="2.60.40.2140:FF:000001">
    <property type="entry name" value="Beta-1,3-glucan-binding protein"/>
    <property type="match status" value="1"/>
</dbReference>
<dbReference type="Gene3D" id="2.60.120.200">
    <property type="match status" value="1"/>
</dbReference>
<dbReference type="Gene3D" id="2.60.40.2140">
    <property type="entry name" value="Beta-1,3-glucan-recognition protein, N-terminal domain"/>
    <property type="match status" value="1"/>
</dbReference>
<dbReference type="InterPro" id="IPR031756">
    <property type="entry name" value="BGBP_N"/>
</dbReference>
<dbReference type="InterPro" id="IPR043030">
    <property type="entry name" value="BGBP_N_sf"/>
</dbReference>
<dbReference type="InterPro" id="IPR013320">
    <property type="entry name" value="ConA-like_dom_sf"/>
</dbReference>
<dbReference type="InterPro" id="IPR000757">
    <property type="entry name" value="GH16"/>
</dbReference>
<dbReference type="InterPro" id="IPR035806">
    <property type="entry name" value="GH16_GRP_C"/>
</dbReference>
<dbReference type="InterPro" id="IPR050546">
    <property type="entry name" value="Glycosyl_Hydrlase_16"/>
</dbReference>
<dbReference type="PANTHER" id="PTHR10963">
    <property type="entry name" value="GLYCOSYL HYDROLASE-RELATED"/>
    <property type="match status" value="1"/>
</dbReference>
<dbReference type="PANTHER" id="PTHR10963:SF60">
    <property type="entry name" value="GRAM-NEGATIVE BACTERIA-BINDING PROTEIN 1-RELATED"/>
    <property type="match status" value="1"/>
</dbReference>
<dbReference type="Pfam" id="PF15886">
    <property type="entry name" value="CBM39"/>
    <property type="match status" value="1"/>
</dbReference>
<dbReference type="Pfam" id="PF00722">
    <property type="entry name" value="Glyco_hydro_16"/>
    <property type="match status" value="1"/>
</dbReference>
<dbReference type="SUPFAM" id="SSF49899">
    <property type="entry name" value="Concanavalin A-like lectins/glucanases"/>
    <property type="match status" value="1"/>
</dbReference>
<dbReference type="PROSITE" id="PS51969">
    <property type="entry name" value="CBM39"/>
    <property type="match status" value="1"/>
</dbReference>
<dbReference type="PROSITE" id="PS51762">
    <property type="entry name" value="GH16_2"/>
    <property type="match status" value="1"/>
</dbReference>
<comment type="function">
    <text evidence="5">Involved in the recognition of invading microorganisms. Binds specifically to beta-1,3-glucan and activates the phenoloxidase cascade. Causes aggregation of invading microorganisms.</text>
</comment>
<comment type="subunit">
    <text evidence="5">Monomer.</text>
</comment>
<comment type="subcellular location">
    <subcellularLocation>
        <location evidence="5">Secreted</location>
    </subcellularLocation>
</comment>
<comment type="tissue specificity">
    <text evidence="5">Fat body and hemolymph.</text>
</comment>
<comment type="developmental stage">
    <text evidence="6">Expression is maintained at a moderate level during larval feeding and wandering stages.</text>
</comment>
<comment type="PTM">
    <text evidence="5">N-glycosylated.</text>
</comment>
<comment type="mass spectrometry"/>
<comment type="similarity">
    <text evidence="7">Belongs to the insect beta-1,3-glucan binding protein family.</text>
</comment>
<sequence>MLKSVFVLFLVNYLNSVRCLEVPDAKLEAIYPKGLRVSIPDDGYTLFAFHGKLNEEMEGLEAGHWSRDITKAKNGRWIFRDRNAKLKIGDKIYFWTYILKDGLGYRQDNGEWTVTGYVNEDGEPLDANFEPRSTASTAAPPQAGAGQAPGPSYPCELSVSEVSVPGFVCKGQMLFEDNFNKPLADGRIWTPEIMFPGEPDYPFNVYMKETDNLHVGNGNLVIKPMPLVTAFGEDAIWKTLDLSDRCTGLLGTAQCKRDPSDAIIVPPIVTAKINTKKTFAFKYGRVEISAKMPRGDWLVPLIQLEPVNKNYGIRNYVSGLLRVACVKGNTEYIKTLVGGPIMSEAEPYRTANLKEFISNEPWTNEFHNYTLEWSPDAITMAVDGIVYGRVTAPAGGFYKEANEQNVEAAARWIQGSNIAPFDDMFYISLGMDVGGVHEFPDEAINKPWKNTATKAMVNFWNARSQWNPTWLESEKALLVDYVRVYAL</sequence>
<proteinExistence type="evidence at protein level"/>
<accession>Q9NJ98</accession>